<sequence>MSEQHAQGADAVVDLNNELKTRREKLANLREQGIAFPNDFRRDHTSDQLHAEFDGKENEELEALNIEVAVAGRMMTRRIMGKASFVTLQDVGGRIQLYVARDDLPEGVYNEQFKKWDLGDILGAKGKLFKTKTGELSIHCTELRLLTKALRPLPDKFHGLQDQEARYRQRYLDLISNDESRNTFKVRSQILSGIRQFMVNRGFMEVETPMMQVIPGGAAARPFITHHNALDLDMYLRIAPELYLKRLVVGGFERVFEINRNFRNEGISVRHNPEFTMMELYMAYADYKDLIELTESLFRTLAQDILGKTEVTYGDVTLDFGKPFEKLTMREAIKKYRPETDMADLDNFDSAKAIAESIGIHVEKSWGLGRIVTEIFEEVAEAHLIQPTFITEYPAEVSPLARRNDINPEITDRFEFFIGGREIGNGFSELNDAEDQAQRFLDQVAAKDAGDDEAMFYDEDYVTALEHGLPPTAGLGIGIDRMVMLFTNSHTIRDVILFPAMRPVK</sequence>
<reference key="1">
    <citation type="journal article" date="2002" name="Nucleic Acids Res.">
        <title>Genome sequence of Shigella flexneri 2a: insights into pathogenicity through comparison with genomes of Escherichia coli K12 and O157.</title>
        <authorList>
            <person name="Jin Q."/>
            <person name="Yuan Z."/>
            <person name="Xu J."/>
            <person name="Wang Y."/>
            <person name="Shen Y."/>
            <person name="Lu W."/>
            <person name="Wang J."/>
            <person name="Liu H."/>
            <person name="Yang J."/>
            <person name="Yang F."/>
            <person name="Zhang X."/>
            <person name="Zhang J."/>
            <person name="Yang G."/>
            <person name="Wu H."/>
            <person name="Qu D."/>
            <person name="Dong J."/>
            <person name="Sun L."/>
            <person name="Xue Y."/>
            <person name="Zhao A."/>
            <person name="Gao Y."/>
            <person name="Zhu J."/>
            <person name="Kan B."/>
            <person name="Ding K."/>
            <person name="Chen S."/>
            <person name="Cheng H."/>
            <person name="Yao Z."/>
            <person name="He B."/>
            <person name="Chen R."/>
            <person name="Ma D."/>
            <person name="Qiang B."/>
            <person name="Wen Y."/>
            <person name="Hou Y."/>
            <person name="Yu J."/>
        </authorList>
    </citation>
    <scope>NUCLEOTIDE SEQUENCE [LARGE SCALE GENOMIC DNA]</scope>
    <source>
        <strain>301 / Serotype 2a</strain>
    </source>
</reference>
<reference key="2">
    <citation type="journal article" date="2003" name="Infect. Immun.">
        <title>Complete genome sequence and comparative genomics of Shigella flexneri serotype 2a strain 2457T.</title>
        <authorList>
            <person name="Wei J."/>
            <person name="Goldberg M.B."/>
            <person name="Burland V."/>
            <person name="Venkatesan M.M."/>
            <person name="Deng W."/>
            <person name="Fournier G."/>
            <person name="Mayhew G.F."/>
            <person name="Plunkett G. III"/>
            <person name="Rose D.J."/>
            <person name="Darling A."/>
            <person name="Mau B."/>
            <person name="Perna N.T."/>
            <person name="Payne S.M."/>
            <person name="Runyen-Janecky L.J."/>
            <person name="Zhou S."/>
            <person name="Schwartz D.C."/>
            <person name="Blattner F.R."/>
        </authorList>
    </citation>
    <scope>NUCLEOTIDE SEQUENCE [LARGE SCALE GENOMIC DNA]</scope>
    <source>
        <strain>ATCC 700930 / 2457T / Serotype 2a</strain>
    </source>
</reference>
<keyword id="KW-0030">Aminoacyl-tRNA synthetase</keyword>
<keyword id="KW-0067">ATP-binding</keyword>
<keyword id="KW-0963">Cytoplasm</keyword>
<keyword id="KW-0436">Ligase</keyword>
<keyword id="KW-0460">Magnesium</keyword>
<keyword id="KW-0479">Metal-binding</keyword>
<keyword id="KW-0547">Nucleotide-binding</keyword>
<keyword id="KW-0648">Protein biosynthesis</keyword>
<keyword id="KW-1185">Reference proteome</keyword>
<dbReference type="EC" id="6.1.1.6" evidence="2"/>
<dbReference type="EMBL" id="AE005674">
    <property type="protein sequence ID" value="AAN44362.1"/>
    <property type="molecule type" value="Genomic_DNA"/>
</dbReference>
<dbReference type="EMBL" id="AE014073">
    <property type="protein sequence ID" value="AAP18183.1"/>
    <property type="molecule type" value="Genomic_DNA"/>
</dbReference>
<dbReference type="RefSeq" id="NP_708655.1">
    <property type="nucleotide sequence ID" value="NC_004337.2"/>
</dbReference>
<dbReference type="RefSeq" id="WP_000003068.1">
    <property type="nucleotide sequence ID" value="NZ_WPGW01000018.1"/>
</dbReference>
<dbReference type="SMR" id="Q83JU6"/>
<dbReference type="STRING" id="198214.SF2876"/>
<dbReference type="PaxDb" id="198214-SF2876"/>
<dbReference type="GeneID" id="1025848"/>
<dbReference type="GeneID" id="93779112"/>
<dbReference type="KEGG" id="sfl:SF2876"/>
<dbReference type="KEGG" id="sfx:S3075"/>
<dbReference type="PATRIC" id="fig|198214.7.peg.3422"/>
<dbReference type="HOGENOM" id="CLU_008255_6_0_6"/>
<dbReference type="Proteomes" id="UP000001006">
    <property type="component" value="Chromosome"/>
</dbReference>
<dbReference type="Proteomes" id="UP000002673">
    <property type="component" value="Chromosome"/>
</dbReference>
<dbReference type="GO" id="GO:0005829">
    <property type="term" value="C:cytosol"/>
    <property type="evidence" value="ECO:0007669"/>
    <property type="project" value="TreeGrafter"/>
</dbReference>
<dbReference type="GO" id="GO:0005524">
    <property type="term" value="F:ATP binding"/>
    <property type="evidence" value="ECO:0007669"/>
    <property type="project" value="UniProtKB-UniRule"/>
</dbReference>
<dbReference type="GO" id="GO:0004824">
    <property type="term" value="F:lysine-tRNA ligase activity"/>
    <property type="evidence" value="ECO:0007669"/>
    <property type="project" value="UniProtKB-UniRule"/>
</dbReference>
<dbReference type="GO" id="GO:0000287">
    <property type="term" value="F:magnesium ion binding"/>
    <property type="evidence" value="ECO:0007669"/>
    <property type="project" value="UniProtKB-UniRule"/>
</dbReference>
<dbReference type="GO" id="GO:0000049">
    <property type="term" value="F:tRNA binding"/>
    <property type="evidence" value="ECO:0007669"/>
    <property type="project" value="TreeGrafter"/>
</dbReference>
<dbReference type="GO" id="GO:0006430">
    <property type="term" value="P:lysyl-tRNA aminoacylation"/>
    <property type="evidence" value="ECO:0007669"/>
    <property type="project" value="UniProtKB-UniRule"/>
</dbReference>
<dbReference type="CDD" id="cd00775">
    <property type="entry name" value="LysRS_core"/>
    <property type="match status" value="1"/>
</dbReference>
<dbReference type="CDD" id="cd04322">
    <property type="entry name" value="LysRS_N"/>
    <property type="match status" value="1"/>
</dbReference>
<dbReference type="FunFam" id="2.40.50.140:FF:000024">
    <property type="entry name" value="Lysine--tRNA ligase"/>
    <property type="match status" value="1"/>
</dbReference>
<dbReference type="FunFam" id="3.30.930.10:FF:000001">
    <property type="entry name" value="Lysine--tRNA ligase"/>
    <property type="match status" value="1"/>
</dbReference>
<dbReference type="Gene3D" id="3.30.930.10">
    <property type="entry name" value="Bira Bifunctional Protein, Domain 2"/>
    <property type="match status" value="1"/>
</dbReference>
<dbReference type="Gene3D" id="2.40.50.140">
    <property type="entry name" value="Nucleic acid-binding proteins"/>
    <property type="match status" value="1"/>
</dbReference>
<dbReference type="HAMAP" id="MF_00252">
    <property type="entry name" value="Lys_tRNA_synth_class2"/>
    <property type="match status" value="1"/>
</dbReference>
<dbReference type="InterPro" id="IPR004364">
    <property type="entry name" value="Aa-tRNA-synt_II"/>
</dbReference>
<dbReference type="InterPro" id="IPR006195">
    <property type="entry name" value="aa-tRNA-synth_II"/>
</dbReference>
<dbReference type="InterPro" id="IPR045864">
    <property type="entry name" value="aa-tRNA-synth_II/BPL/LPL"/>
</dbReference>
<dbReference type="InterPro" id="IPR002313">
    <property type="entry name" value="Lys-tRNA-ligase_II"/>
</dbReference>
<dbReference type="InterPro" id="IPR034762">
    <property type="entry name" value="Lys-tRNA-ligase_II_bac/euk"/>
</dbReference>
<dbReference type="InterPro" id="IPR044136">
    <property type="entry name" value="Lys-tRNA-ligase_II_N"/>
</dbReference>
<dbReference type="InterPro" id="IPR018149">
    <property type="entry name" value="Lys-tRNA-synth_II_C"/>
</dbReference>
<dbReference type="InterPro" id="IPR012340">
    <property type="entry name" value="NA-bd_OB-fold"/>
</dbReference>
<dbReference type="InterPro" id="IPR004365">
    <property type="entry name" value="NA-bd_OB_tRNA"/>
</dbReference>
<dbReference type="NCBIfam" id="TIGR00499">
    <property type="entry name" value="lysS_bact"/>
    <property type="match status" value="1"/>
</dbReference>
<dbReference type="NCBIfam" id="NF001756">
    <property type="entry name" value="PRK00484.1"/>
    <property type="match status" value="1"/>
</dbReference>
<dbReference type="NCBIfam" id="NF009101">
    <property type="entry name" value="PRK12445.1"/>
    <property type="match status" value="1"/>
</dbReference>
<dbReference type="PANTHER" id="PTHR42918:SF15">
    <property type="entry name" value="LYSINE--TRNA LIGASE, CHLOROPLASTIC_MITOCHONDRIAL"/>
    <property type="match status" value="1"/>
</dbReference>
<dbReference type="PANTHER" id="PTHR42918">
    <property type="entry name" value="LYSYL-TRNA SYNTHETASE"/>
    <property type="match status" value="1"/>
</dbReference>
<dbReference type="Pfam" id="PF00152">
    <property type="entry name" value="tRNA-synt_2"/>
    <property type="match status" value="1"/>
</dbReference>
<dbReference type="Pfam" id="PF01336">
    <property type="entry name" value="tRNA_anti-codon"/>
    <property type="match status" value="1"/>
</dbReference>
<dbReference type="PIRSF" id="PIRSF039101">
    <property type="entry name" value="LysRS2"/>
    <property type="match status" value="1"/>
</dbReference>
<dbReference type="PRINTS" id="PR00982">
    <property type="entry name" value="TRNASYNTHLYS"/>
</dbReference>
<dbReference type="SUPFAM" id="SSF55681">
    <property type="entry name" value="Class II aaRS and biotin synthetases"/>
    <property type="match status" value="1"/>
</dbReference>
<dbReference type="SUPFAM" id="SSF50249">
    <property type="entry name" value="Nucleic acid-binding proteins"/>
    <property type="match status" value="1"/>
</dbReference>
<dbReference type="PROSITE" id="PS50862">
    <property type="entry name" value="AA_TRNA_LIGASE_II"/>
    <property type="match status" value="1"/>
</dbReference>
<feature type="initiator methionine" description="Removed" evidence="1">
    <location>
        <position position="1"/>
    </location>
</feature>
<feature type="chain" id="PRO_0000152674" description="Lysine--tRNA ligase">
    <location>
        <begin position="2"/>
        <end position="505"/>
    </location>
</feature>
<feature type="binding site" evidence="2">
    <location>
        <position position="415"/>
    </location>
    <ligand>
        <name>Mg(2+)</name>
        <dbReference type="ChEBI" id="CHEBI:18420"/>
        <label>1</label>
    </ligand>
</feature>
<feature type="binding site" evidence="2">
    <location>
        <position position="422"/>
    </location>
    <ligand>
        <name>Mg(2+)</name>
        <dbReference type="ChEBI" id="CHEBI:18420"/>
        <label>1</label>
    </ligand>
</feature>
<feature type="binding site" evidence="2">
    <location>
        <position position="422"/>
    </location>
    <ligand>
        <name>Mg(2+)</name>
        <dbReference type="ChEBI" id="CHEBI:18420"/>
        <label>2</label>
    </ligand>
</feature>
<proteinExistence type="inferred from homology"/>
<accession>Q83JU6</accession>
<protein>
    <recommendedName>
        <fullName evidence="2">Lysine--tRNA ligase</fullName>
        <ecNumber evidence="2">6.1.1.6</ecNumber>
    </recommendedName>
    <alternativeName>
        <fullName evidence="2">Lysyl-tRNA synthetase</fullName>
        <shortName evidence="2">LysRS</shortName>
    </alternativeName>
</protein>
<gene>
    <name evidence="2" type="primary">lysS</name>
    <name type="ordered locus">SF2876</name>
    <name type="ordered locus">S3075</name>
</gene>
<name>SYK1_SHIFL</name>
<organism>
    <name type="scientific">Shigella flexneri</name>
    <dbReference type="NCBI Taxonomy" id="623"/>
    <lineage>
        <taxon>Bacteria</taxon>
        <taxon>Pseudomonadati</taxon>
        <taxon>Pseudomonadota</taxon>
        <taxon>Gammaproteobacteria</taxon>
        <taxon>Enterobacterales</taxon>
        <taxon>Enterobacteriaceae</taxon>
        <taxon>Shigella</taxon>
    </lineage>
</organism>
<comment type="catalytic activity">
    <reaction evidence="2">
        <text>tRNA(Lys) + L-lysine + ATP = L-lysyl-tRNA(Lys) + AMP + diphosphate</text>
        <dbReference type="Rhea" id="RHEA:20792"/>
        <dbReference type="Rhea" id="RHEA-COMP:9696"/>
        <dbReference type="Rhea" id="RHEA-COMP:9697"/>
        <dbReference type="ChEBI" id="CHEBI:30616"/>
        <dbReference type="ChEBI" id="CHEBI:32551"/>
        <dbReference type="ChEBI" id="CHEBI:33019"/>
        <dbReference type="ChEBI" id="CHEBI:78442"/>
        <dbReference type="ChEBI" id="CHEBI:78529"/>
        <dbReference type="ChEBI" id="CHEBI:456215"/>
        <dbReference type="EC" id="6.1.1.6"/>
    </reaction>
</comment>
<comment type="cofactor">
    <cofactor evidence="2">
        <name>Mg(2+)</name>
        <dbReference type="ChEBI" id="CHEBI:18420"/>
    </cofactor>
    <text evidence="2">Binds 3 Mg(2+) ions per subunit.</text>
</comment>
<comment type="subunit">
    <text evidence="2">Homodimer.</text>
</comment>
<comment type="subcellular location">
    <subcellularLocation>
        <location evidence="2">Cytoplasm</location>
    </subcellularLocation>
</comment>
<comment type="similarity">
    <text evidence="2">Belongs to the class-II aminoacyl-tRNA synthetase family.</text>
</comment>
<evidence type="ECO:0000250" key="1"/>
<evidence type="ECO:0000255" key="2">
    <source>
        <dbReference type="HAMAP-Rule" id="MF_00252"/>
    </source>
</evidence>